<dbReference type="EMBL" id="AM270409">
    <property type="protein sequence ID" value="CAK97491.1"/>
    <property type="molecule type" value="Genomic_DNA"/>
</dbReference>
<dbReference type="RefSeq" id="XP_001399023.1">
    <property type="nucleotide sequence ID" value="XM_001398986.2"/>
</dbReference>
<dbReference type="SMR" id="A2RB71"/>
<dbReference type="EnsemblFungi" id="CAK97491">
    <property type="protein sequence ID" value="CAK97491"/>
    <property type="gene ID" value="An18g05720"/>
</dbReference>
<dbReference type="GeneID" id="4990138"/>
<dbReference type="KEGG" id="ang:An18g05720"/>
<dbReference type="VEuPathDB" id="FungiDB:An18g05720"/>
<dbReference type="HOGENOM" id="CLU_024459_0_0_1"/>
<dbReference type="Proteomes" id="UP000006706">
    <property type="component" value="Chromosome 8L"/>
</dbReference>
<dbReference type="GO" id="GO:0005737">
    <property type="term" value="C:cytoplasm"/>
    <property type="evidence" value="ECO:0007669"/>
    <property type="project" value="UniProtKB-SubCell"/>
</dbReference>
<dbReference type="GO" id="GO:0005634">
    <property type="term" value="C:nucleus"/>
    <property type="evidence" value="ECO:0007669"/>
    <property type="project" value="UniProtKB-SubCell"/>
</dbReference>
<dbReference type="GO" id="GO:0004190">
    <property type="term" value="F:aspartic-type endopeptidase activity"/>
    <property type="evidence" value="ECO:0007669"/>
    <property type="project" value="InterPro"/>
</dbReference>
<dbReference type="GO" id="GO:0004865">
    <property type="term" value="F:protein serine/threonine phosphatase inhibitor activity"/>
    <property type="evidence" value="ECO:0007669"/>
    <property type="project" value="TreeGrafter"/>
</dbReference>
<dbReference type="GO" id="GO:0042149">
    <property type="term" value="P:cellular response to glucose starvation"/>
    <property type="evidence" value="ECO:0007669"/>
    <property type="project" value="InterPro"/>
</dbReference>
<dbReference type="GO" id="GO:0006508">
    <property type="term" value="P:proteolysis"/>
    <property type="evidence" value="ECO:0007669"/>
    <property type="project" value="InterPro"/>
</dbReference>
<dbReference type="GO" id="GO:0030071">
    <property type="term" value="P:regulation of mitotic metaphase/anaphase transition"/>
    <property type="evidence" value="ECO:0007669"/>
    <property type="project" value="InterPro"/>
</dbReference>
<dbReference type="CDD" id="cd02205">
    <property type="entry name" value="CBS_pair_SF"/>
    <property type="match status" value="1"/>
</dbReference>
<dbReference type="Gene3D" id="3.10.580.10">
    <property type="entry name" value="CBS-domain"/>
    <property type="match status" value="2"/>
</dbReference>
<dbReference type="InterPro" id="IPR050511">
    <property type="entry name" value="AMPK_gamma/SDS23_families"/>
</dbReference>
<dbReference type="InterPro" id="IPR001969">
    <property type="entry name" value="Aspartic_peptidase_AS"/>
</dbReference>
<dbReference type="InterPro" id="IPR000644">
    <property type="entry name" value="CBS_dom"/>
</dbReference>
<dbReference type="InterPro" id="IPR046342">
    <property type="entry name" value="CBS_dom_sf"/>
</dbReference>
<dbReference type="InterPro" id="IPR016711">
    <property type="entry name" value="Ssd23"/>
</dbReference>
<dbReference type="PANTHER" id="PTHR13780">
    <property type="entry name" value="AMP-ACTIVATED PROTEIN KINASE, GAMMA REGULATORY SUBUNIT"/>
    <property type="match status" value="1"/>
</dbReference>
<dbReference type="PANTHER" id="PTHR13780:SF36">
    <property type="entry name" value="CBS DOMAIN-CONTAINING PROTEIN"/>
    <property type="match status" value="1"/>
</dbReference>
<dbReference type="Pfam" id="PF00571">
    <property type="entry name" value="CBS"/>
    <property type="match status" value="2"/>
</dbReference>
<dbReference type="PIRSF" id="PIRSF018148">
    <property type="entry name" value="UCP018148_CBS_YBR214w"/>
    <property type="match status" value="1"/>
</dbReference>
<dbReference type="SMART" id="SM00116">
    <property type="entry name" value="CBS"/>
    <property type="match status" value="3"/>
</dbReference>
<dbReference type="SUPFAM" id="SSF54631">
    <property type="entry name" value="CBS-domain pair"/>
    <property type="match status" value="2"/>
</dbReference>
<dbReference type="PROSITE" id="PS51371">
    <property type="entry name" value="CBS"/>
    <property type="match status" value="3"/>
</dbReference>
<accession>A2RB71</accession>
<sequence>MTDRPMETVADSNSSGSNLASPRSSTDSRTPSASVRSLRLSSHAPNHQHRQSISDTLRATPGSPRARRQPSLTQAAIQSLIDNPPAPNNANPAFVGRDWREISIGELVSPDDLKFVEINTGIEEATNILIDTGAPVLLIRESPQHKSAVGTFDYADLNAYLLLAAGLTQPNEELLASYEELARKAKEGIPIPLRDVKDLGRKEPLTTLPASASVMTAVQTFGGGVHRVVVVSERDDNEVLGIFSQFRLVKFLWENGRSFPVIDQLYPQSLHDLRIGSRDVISINGDRPLVDALQIMNEEGISSIAVVDSHFNVVGNISTTDVKLLTRSSSLPLLRNTCTHFISVILSNRGLEEGKDSFPVFHVNPGSTLAHTVAKVVATRSHRLWVTDPLSPSSSGPPTPSHSSVHIPLVTNSSPPPSPAVNNGTAAPAAYLSAPSIPASALPGARLSGRLVGVVSLTDILNLHARASGLSPADPAESRSRRRRSSSSSVGVRRSGEIGRELFSGRIV</sequence>
<reference key="1">
    <citation type="journal article" date="2007" name="Nat. Biotechnol.">
        <title>Genome sequencing and analysis of the versatile cell factory Aspergillus niger CBS 513.88.</title>
        <authorList>
            <person name="Pel H.J."/>
            <person name="de Winde J.H."/>
            <person name="Archer D.B."/>
            <person name="Dyer P.S."/>
            <person name="Hofmann G."/>
            <person name="Schaap P.J."/>
            <person name="Turner G."/>
            <person name="de Vries R.P."/>
            <person name="Albang R."/>
            <person name="Albermann K."/>
            <person name="Andersen M.R."/>
            <person name="Bendtsen J.D."/>
            <person name="Benen J.A.E."/>
            <person name="van den Berg M."/>
            <person name="Breestraat S."/>
            <person name="Caddick M.X."/>
            <person name="Contreras R."/>
            <person name="Cornell M."/>
            <person name="Coutinho P.M."/>
            <person name="Danchin E.G.J."/>
            <person name="Debets A.J.M."/>
            <person name="Dekker P."/>
            <person name="van Dijck P.W.M."/>
            <person name="van Dijk A."/>
            <person name="Dijkhuizen L."/>
            <person name="Driessen A.J.M."/>
            <person name="d'Enfert C."/>
            <person name="Geysens S."/>
            <person name="Goosen C."/>
            <person name="Groot G.S.P."/>
            <person name="de Groot P.W.J."/>
            <person name="Guillemette T."/>
            <person name="Henrissat B."/>
            <person name="Herweijer M."/>
            <person name="van den Hombergh J.P.T.W."/>
            <person name="van den Hondel C.A.M.J.J."/>
            <person name="van der Heijden R.T.J.M."/>
            <person name="van der Kaaij R.M."/>
            <person name="Klis F.M."/>
            <person name="Kools H.J."/>
            <person name="Kubicek C.P."/>
            <person name="van Kuyk P.A."/>
            <person name="Lauber J."/>
            <person name="Lu X."/>
            <person name="van der Maarel M.J.E.C."/>
            <person name="Meulenberg R."/>
            <person name="Menke H."/>
            <person name="Mortimer M.A."/>
            <person name="Nielsen J."/>
            <person name="Oliver S.G."/>
            <person name="Olsthoorn M."/>
            <person name="Pal K."/>
            <person name="van Peij N.N.M.E."/>
            <person name="Ram A.F.J."/>
            <person name="Rinas U."/>
            <person name="Roubos J.A."/>
            <person name="Sagt C.M.J."/>
            <person name="Schmoll M."/>
            <person name="Sun J."/>
            <person name="Ussery D."/>
            <person name="Varga J."/>
            <person name="Vervecken W."/>
            <person name="van de Vondervoort P.J.J."/>
            <person name="Wedler H."/>
            <person name="Woesten H.A.B."/>
            <person name="Zeng A.-P."/>
            <person name="van Ooyen A.J.J."/>
            <person name="Visser J."/>
            <person name="Stam H."/>
        </authorList>
    </citation>
    <scope>NUCLEOTIDE SEQUENCE [LARGE SCALE GENOMIC DNA]</scope>
    <source>
        <strain>ATCC MYA-4892 / CBS 513.88 / FGSC A1513</strain>
    </source>
</reference>
<keyword id="KW-0129">CBS domain</keyword>
<keyword id="KW-0963">Cytoplasm</keyword>
<keyword id="KW-0539">Nucleus</keyword>
<keyword id="KW-1185">Reference proteome</keyword>
<keyword id="KW-0677">Repeat</keyword>
<gene>
    <name type="primary">sds23</name>
    <name type="ORF">An18g05720</name>
</gene>
<organism>
    <name type="scientific">Aspergillus niger (strain ATCC MYA-4892 / CBS 513.88 / FGSC A1513)</name>
    <dbReference type="NCBI Taxonomy" id="425011"/>
    <lineage>
        <taxon>Eukaryota</taxon>
        <taxon>Fungi</taxon>
        <taxon>Dikarya</taxon>
        <taxon>Ascomycota</taxon>
        <taxon>Pezizomycotina</taxon>
        <taxon>Eurotiomycetes</taxon>
        <taxon>Eurotiomycetidae</taxon>
        <taxon>Eurotiales</taxon>
        <taxon>Aspergillaceae</taxon>
        <taxon>Aspergillus</taxon>
        <taxon>Aspergillus subgen. Circumdati</taxon>
    </lineage>
</organism>
<protein>
    <recommendedName>
        <fullName>Protein sds23</fullName>
    </recommendedName>
</protein>
<evidence type="ECO:0000250" key="1"/>
<evidence type="ECO:0000255" key="2">
    <source>
        <dbReference type="PROSITE-ProRule" id="PRU00703"/>
    </source>
</evidence>
<evidence type="ECO:0000256" key="3">
    <source>
        <dbReference type="SAM" id="MobiDB-lite"/>
    </source>
</evidence>
<evidence type="ECO:0000305" key="4"/>
<proteinExistence type="inferred from homology"/>
<name>SDS23_ASPNC</name>
<comment type="function">
    <text evidence="1">Involved in DNA replication and cell separation.</text>
</comment>
<comment type="subcellular location">
    <subcellularLocation>
        <location evidence="1">Cytoplasm</location>
    </subcellularLocation>
    <subcellularLocation>
        <location evidence="1">Nucleus</location>
    </subcellularLocation>
</comment>
<comment type="similarity">
    <text evidence="4">Belongs to the SDS23 family.</text>
</comment>
<feature type="chain" id="PRO_0000324947" description="Protein sds23">
    <location>
        <begin position="1"/>
        <end position="508"/>
    </location>
</feature>
<feature type="domain" description="CBS 1" evidence="2">
    <location>
        <begin position="108"/>
        <end position="173"/>
    </location>
</feature>
<feature type="domain" description="CBS 2" evidence="2">
    <location>
        <begin position="199"/>
        <end position="258"/>
    </location>
</feature>
<feature type="domain" description="CBS 3" evidence="2">
    <location>
        <begin position="276"/>
        <end position="333"/>
    </location>
</feature>
<feature type="domain" description="CBS 4" evidence="2">
    <location>
        <begin position="336"/>
        <end position="394"/>
    </location>
</feature>
<feature type="region of interest" description="Disordered" evidence="3">
    <location>
        <begin position="1"/>
        <end position="71"/>
    </location>
</feature>
<feature type="region of interest" description="Disordered" evidence="3">
    <location>
        <begin position="389"/>
        <end position="422"/>
    </location>
</feature>
<feature type="region of interest" description="Disordered" evidence="3">
    <location>
        <begin position="469"/>
        <end position="494"/>
    </location>
</feature>
<feature type="compositionally biased region" description="Polar residues" evidence="3">
    <location>
        <begin position="10"/>
        <end position="19"/>
    </location>
</feature>
<feature type="compositionally biased region" description="Low complexity" evidence="3">
    <location>
        <begin position="20"/>
        <end position="34"/>
    </location>
</feature>
<feature type="compositionally biased region" description="Polar residues" evidence="3">
    <location>
        <begin position="39"/>
        <end position="57"/>
    </location>
</feature>